<organism>
    <name type="scientific">Sus scrofa</name>
    <name type="common">Pig</name>
    <dbReference type="NCBI Taxonomy" id="9823"/>
    <lineage>
        <taxon>Eukaryota</taxon>
        <taxon>Metazoa</taxon>
        <taxon>Chordata</taxon>
        <taxon>Craniata</taxon>
        <taxon>Vertebrata</taxon>
        <taxon>Euteleostomi</taxon>
        <taxon>Mammalia</taxon>
        <taxon>Eutheria</taxon>
        <taxon>Laurasiatheria</taxon>
        <taxon>Artiodactyla</taxon>
        <taxon>Suina</taxon>
        <taxon>Suidae</taxon>
        <taxon>Sus</taxon>
    </lineage>
</organism>
<proteinExistence type="evidence at protein level"/>
<accession>Q8WMR7</accession>
<accession>I3LNI9</accession>
<reference key="1">
    <citation type="submission" date="2023-07" db="EMBL/GenBank/DDBJ databases">
        <authorList>
            <consortium name="Porcine genome sequencing project"/>
        </authorList>
    </citation>
    <scope>NUCLEOTIDE SEQUENCE [LARGE SCALE GENOMIC DNA]</scope>
    <source>
        <strain>Duroc</strain>
    </source>
</reference>
<reference key="2">
    <citation type="journal article" date="2002" name="J. Biol. Chem.">
        <title>Bestrophin interacts physically and functionally with protein phosphatase 2A.</title>
        <authorList>
            <person name="Marmorstein L.Y."/>
            <person name="McLaughlin P.J."/>
            <person name="Stanton J.B."/>
            <person name="Yan L."/>
            <person name="Crabb J.W."/>
            <person name="Marmorstein A.D."/>
        </authorList>
    </citation>
    <scope>NUCLEOTIDE SEQUENCE [MRNA] OF 154-581</scope>
    <scope>IDENTIFICATION BY MASS SPECTROMETRY</scope>
    <scope>PHOSPHORYLATION</scope>
</reference>
<keyword id="KW-0106">Calcium</keyword>
<keyword id="KW-1003">Cell membrane</keyword>
<keyword id="KW-0868">Chloride</keyword>
<keyword id="KW-0869">Chloride channel</keyword>
<keyword id="KW-0407">Ion channel</keyword>
<keyword id="KW-0406">Ion transport</keyword>
<keyword id="KW-0472">Membrane</keyword>
<keyword id="KW-0479">Metal-binding</keyword>
<keyword id="KW-0597">Phosphoprotein</keyword>
<keyword id="KW-1185">Reference proteome</keyword>
<keyword id="KW-0812">Transmembrane</keyword>
<keyword id="KW-1133">Transmembrane helix</keyword>
<keyword id="KW-0813">Transport</keyword>
<name>BEST1_PIG</name>
<evidence type="ECO:0000250" key="1">
    <source>
        <dbReference type="UniProtKB" id="O76090"/>
    </source>
</evidence>
<evidence type="ECO:0000250" key="2">
    <source>
        <dbReference type="UniProtKB" id="O88870"/>
    </source>
</evidence>
<evidence type="ECO:0000256" key="3">
    <source>
        <dbReference type="SAM" id="MobiDB-lite"/>
    </source>
</evidence>
<evidence type="ECO:0000269" key="4">
    <source>
    </source>
</evidence>
<evidence type="ECO:0000305" key="5"/>
<dbReference type="EMBL" id="JH114940">
    <property type="status" value="NOT_ANNOTATED_CDS"/>
    <property type="molecule type" value="Genomic_DNA"/>
</dbReference>
<dbReference type="EMBL" id="AY064707">
    <property type="protein sequence ID" value="AAL40882.1"/>
    <property type="molecule type" value="mRNA"/>
</dbReference>
<dbReference type="SMR" id="Q8WMR7"/>
<dbReference type="CORUM" id="Q8WMR7"/>
<dbReference type="FunCoup" id="Q8WMR7">
    <property type="interactions" value="170"/>
</dbReference>
<dbReference type="STRING" id="9823.ENSSSCP00000025663"/>
<dbReference type="PaxDb" id="9823-ENSSSCP00000025663"/>
<dbReference type="PeptideAtlas" id="Q8WMR7"/>
<dbReference type="eggNOG" id="KOG3547">
    <property type="taxonomic scope" value="Eukaryota"/>
</dbReference>
<dbReference type="InParanoid" id="Q8WMR7"/>
<dbReference type="TreeFam" id="TF315803"/>
<dbReference type="Reactome" id="R-SSC-2672351">
    <property type="pathway name" value="Stimuli-sensing channels"/>
</dbReference>
<dbReference type="Proteomes" id="UP000008227">
    <property type="component" value="Chromosome 2"/>
</dbReference>
<dbReference type="Proteomes" id="UP000314985">
    <property type="component" value="Unplaced"/>
</dbReference>
<dbReference type="Proteomes" id="UP000694570">
    <property type="component" value="Unplaced"/>
</dbReference>
<dbReference type="Proteomes" id="UP000694571">
    <property type="component" value="Unplaced"/>
</dbReference>
<dbReference type="Proteomes" id="UP000694720">
    <property type="component" value="Unplaced"/>
</dbReference>
<dbReference type="Proteomes" id="UP000694722">
    <property type="component" value="Unplaced"/>
</dbReference>
<dbReference type="Proteomes" id="UP000694723">
    <property type="component" value="Unplaced"/>
</dbReference>
<dbReference type="Proteomes" id="UP000694724">
    <property type="component" value="Unplaced"/>
</dbReference>
<dbReference type="Proteomes" id="UP000694725">
    <property type="component" value="Unplaced"/>
</dbReference>
<dbReference type="Proteomes" id="UP000694726">
    <property type="component" value="Unplaced"/>
</dbReference>
<dbReference type="Proteomes" id="UP000694727">
    <property type="component" value="Unplaced"/>
</dbReference>
<dbReference type="Proteomes" id="UP000694728">
    <property type="component" value="Unplaced"/>
</dbReference>
<dbReference type="Bgee" id="ENSSSCG00000023090">
    <property type="expression patterns" value="Expressed in testis and 22 other cell types or tissues"/>
</dbReference>
<dbReference type="GO" id="GO:0016323">
    <property type="term" value="C:basolateral plasma membrane"/>
    <property type="evidence" value="ECO:0007669"/>
    <property type="project" value="UniProtKB-SubCell"/>
</dbReference>
<dbReference type="GO" id="GO:0034707">
    <property type="term" value="C:chloride channel complex"/>
    <property type="evidence" value="ECO:0007669"/>
    <property type="project" value="UniProtKB-KW"/>
</dbReference>
<dbReference type="GO" id="GO:0098857">
    <property type="term" value="C:membrane microdomain"/>
    <property type="evidence" value="ECO:0000250"/>
    <property type="project" value="UniProtKB"/>
</dbReference>
<dbReference type="GO" id="GO:0005886">
    <property type="term" value="C:plasma membrane"/>
    <property type="evidence" value="ECO:0000250"/>
    <property type="project" value="UniProtKB"/>
</dbReference>
<dbReference type="GO" id="GO:0098793">
    <property type="term" value="C:presynapse"/>
    <property type="evidence" value="ECO:0007669"/>
    <property type="project" value="GOC"/>
</dbReference>
<dbReference type="GO" id="GO:0160133">
    <property type="term" value="F:bicarbonate channel activity"/>
    <property type="evidence" value="ECO:0000250"/>
    <property type="project" value="UniProtKB"/>
</dbReference>
<dbReference type="GO" id="GO:0005229">
    <property type="term" value="F:intracellularly calcium-gated chloride channel activity"/>
    <property type="evidence" value="ECO:0000250"/>
    <property type="project" value="UniProtKB"/>
</dbReference>
<dbReference type="GO" id="GO:0022834">
    <property type="term" value="F:ligand-gated channel activity"/>
    <property type="evidence" value="ECO:0000250"/>
    <property type="project" value="UniProtKB"/>
</dbReference>
<dbReference type="GO" id="GO:0046872">
    <property type="term" value="F:metal ion binding"/>
    <property type="evidence" value="ECO:0007669"/>
    <property type="project" value="UniProtKB-KW"/>
</dbReference>
<dbReference type="GO" id="GO:0061534">
    <property type="term" value="P:gamma-aminobutyric acid secretion, neurotransmission"/>
    <property type="evidence" value="ECO:0000250"/>
    <property type="project" value="UniProtKB"/>
</dbReference>
<dbReference type="GO" id="GO:0014047">
    <property type="term" value="P:glutamate secretion"/>
    <property type="evidence" value="ECO:0000250"/>
    <property type="project" value="UniProtKB"/>
</dbReference>
<dbReference type="GO" id="GO:0051259">
    <property type="term" value="P:protein complex oligomerization"/>
    <property type="evidence" value="ECO:0000250"/>
    <property type="project" value="UniProtKB"/>
</dbReference>
<dbReference type="GO" id="GO:0048167">
    <property type="term" value="P:regulation of synaptic plasticity"/>
    <property type="evidence" value="ECO:0000250"/>
    <property type="project" value="UniProtKB"/>
</dbReference>
<dbReference type="InterPro" id="IPR000615">
    <property type="entry name" value="Bestrophin"/>
</dbReference>
<dbReference type="InterPro" id="IPR021134">
    <property type="entry name" value="Bestrophin-like"/>
</dbReference>
<dbReference type="PANTHER" id="PTHR10736">
    <property type="entry name" value="BESTROPHIN"/>
    <property type="match status" value="1"/>
</dbReference>
<dbReference type="PANTHER" id="PTHR10736:SF4">
    <property type="entry name" value="BESTROPHIN-1"/>
    <property type="match status" value="1"/>
</dbReference>
<dbReference type="Pfam" id="PF01062">
    <property type="entry name" value="Bestrophin"/>
    <property type="match status" value="1"/>
</dbReference>
<sequence>MTVTYSSQVANARLGSFSRLLLCWRGSIYKLLYGEFLIFLLCYYIIRFIYRMALTDEQQVIFEKLTLYCDSYIQLIPISFVLGFYVTLVVTRWWNQYENLPWPDRLMNLVSCFVEGKDEQGRLLRRTLMRYANLGNVLILRSISAAVYKRFPSPQHLVKAGFMTPSEHKHLEKLSLPHNSFWMPWVWFANLSTKAWIGGRIRDPVLLQSLLDEMNTLRTQCGHLYAYDWISVPLVYTQVVTVAVYSFFLACLVGRQFLNPAKAYPGHEMDLVVPLFTFLQFFFYAGWLKVAEQLINPFGEDDDDFETNWIVDRSLQVSLLAVDEMHQDLPPMERDMYWNDPEPHPPYTAASAQSRRPSFFGSTFNISLGKEDMEFQPEEEEEAHTGILGHFLGLQSSDHQPPRTNSKTKLLWPKKEGHFHEGHPKNLRGARLDSSDQEDSKAWREGGFKSAALCGRPGYHSAPQTPLGHTPMVFPPEESAPLGLRRVSGIDEAAKDQSLQPATPSIKKSFELLPESAEASAEPLQGSHVRRKTVEFNLADLSEAPEHLKEPNLEPPMGIHAIIKDHRDPYWALENRDEAHS</sequence>
<comment type="function">
    <text evidence="1 2">Ligand-gated anion channel that allows the movement of anions across cell membranes when activated by calcium (Ca2+). Allows the movement of chloride and hydrogencarbonate. Found in a partially open conformation leading to significantly smaller chloride movement (By similarity). Upon F2R/PAR-1 activation, the sequestered calcium is released into the cytosol of astrocytes, leading to the (Ca2+)-dependent release of L-glutamate into the synaptic cleft that targets the neuronal postsynaptic GRIN2A/NMDAR receptor resulting in the synaptic plasticity regulation. Upon activation of the norepinephrine-alpha-1 adrenergic receptor signaling pathway, transports as well D-serine than L-glutamate in a (Ca2+)-dependent manner, leading to activation of adjacent NMDAR receptors and therefore regulates the heterosynaptic long-term depression and metaplasticity during initial memory acquisition. Releases the 4-aminobutanoate neurotransmitter in a (Ca2+)-dependent manner, and participates in its tonic release from cerebellar glial cells (By similarity).</text>
</comment>
<comment type="catalytic activity">
    <reaction evidence="1">
        <text>chloride(in) = chloride(out)</text>
        <dbReference type="Rhea" id="RHEA:29823"/>
        <dbReference type="ChEBI" id="CHEBI:17996"/>
    </reaction>
</comment>
<comment type="catalytic activity">
    <reaction evidence="1">
        <text>hydrogencarbonate(in) = hydrogencarbonate(out)</text>
        <dbReference type="Rhea" id="RHEA:28695"/>
        <dbReference type="ChEBI" id="CHEBI:17544"/>
    </reaction>
</comment>
<comment type="catalytic activity">
    <reaction evidence="2">
        <text>4-aminobutanoate(in) = 4-aminobutanoate(out)</text>
        <dbReference type="Rhea" id="RHEA:35035"/>
        <dbReference type="ChEBI" id="CHEBI:59888"/>
    </reaction>
</comment>
<comment type="catalytic activity">
    <reaction evidence="2">
        <text>L-glutamate(out) = L-glutamate(in)</text>
        <dbReference type="Rhea" id="RHEA:66336"/>
        <dbReference type="ChEBI" id="CHEBI:29985"/>
    </reaction>
</comment>
<comment type="subunit">
    <text evidence="1">Interacts with YWHAG; this interaction promotes the ligand-gated L-glutamate channel activity leading to the positive regulation of NMDA glutamate receptor activity through the L-glutamate secretion.</text>
</comment>
<comment type="subcellular location">
    <subcellularLocation>
        <location evidence="1">Cell membrane</location>
        <topology evidence="1">Multi-pass membrane protein</topology>
    </subcellularLocation>
    <subcellularLocation>
        <location evidence="1">Basolateral cell membrane</location>
        <topology evidence="1">Multi-pass membrane protein</topology>
    </subcellularLocation>
    <text evidence="2">Localized at the surface membrane of microdomains adjacent to glutamatergic synapses.</text>
</comment>
<comment type="domain">
    <text evidence="1">The C-terminal auto-inhibitory segment (AS) modulates the open/closed conformation of the channel. In a closed conformation, the C-terminal auto-inhibitory segment constricts the channel concentrically by wrapping around the channel periphery in an inter-protomer manner. To allow chloride movement, the C-terminal auto-inhibitory segment opens partially, leading to significantly smaller chloride movement.</text>
</comment>
<comment type="PTM">
    <text evidence="4">Phosphorylated (in vitro).</text>
</comment>
<comment type="PTM">
    <text evidence="4">Dephosphorylated (in vitro) by PP2A.</text>
</comment>
<comment type="similarity">
    <text evidence="5">Belongs to the anion channel-forming bestrophin (TC 1.A.46) family. Calcium-sensitive chloride channel subfamily.</text>
</comment>
<feature type="chain" id="PRO_0000143117" description="Bestrophin-1">
    <location>
        <begin position="1"/>
        <end position="581"/>
    </location>
</feature>
<feature type="topological domain" description="Cytoplasmic" evidence="1">
    <location>
        <begin position="1"/>
        <end position="31"/>
    </location>
</feature>
<feature type="transmembrane region" description="Helical" evidence="1">
    <location>
        <begin position="32"/>
        <end position="51"/>
    </location>
</feature>
<feature type="topological domain" description="Extracellular" evidence="1">
    <location>
        <begin position="52"/>
        <end position="60"/>
    </location>
</feature>
<feature type="transmembrane region" description="Helical" evidence="1">
    <location>
        <begin position="61"/>
        <end position="82"/>
    </location>
</feature>
<feature type="topological domain" description="Cytoplasmic" evidence="1">
    <location>
        <begin position="83"/>
        <end position="237"/>
    </location>
</feature>
<feature type="transmembrane region" description="Helical" evidence="1">
    <location>
        <begin position="238"/>
        <end position="255"/>
    </location>
</feature>
<feature type="topological domain" description="Extracellular" evidence="1">
    <location>
        <begin position="256"/>
        <end position="274"/>
    </location>
</feature>
<feature type="transmembrane region" description="Helical" evidence="1">
    <location>
        <begin position="275"/>
        <end position="288"/>
    </location>
</feature>
<feature type="topological domain" description="Cytoplasmic" evidence="1">
    <location>
        <begin position="289"/>
        <end position="581"/>
    </location>
</feature>
<feature type="region of interest" description="Disordered" evidence="3">
    <location>
        <begin position="416"/>
        <end position="440"/>
    </location>
</feature>
<feature type="binding site" description="in other chain" evidence="1">
    <location>
        <position position="10"/>
    </location>
    <ligand>
        <name>Ca(2+)</name>
        <dbReference type="ChEBI" id="CHEBI:29108"/>
        <note>ligand shared between two neighboring subunits</note>
    </ligand>
</feature>
<feature type="binding site" evidence="1">
    <location>
        <position position="293"/>
    </location>
    <ligand>
        <name>Ca(2+)</name>
        <dbReference type="ChEBI" id="CHEBI:29108"/>
        <note>ligand shared between two neighboring subunits</note>
    </ligand>
</feature>
<feature type="binding site" evidence="1">
    <location>
        <position position="296"/>
    </location>
    <ligand>
        <name>Ca(2+)</name>
        <dbReference type="ChEBI" id="CHEBI:29108"/>
        <note>ligand shared between two neighboring subunits</note>
    </ligand>
</feature>
<feature type="binding site" evidence="1">
    <location>
        <position position="301"/>
    </location>
    <ligand>
        <name>Ca(2+)</name>
        <dbReference type="ChEBI" id="CHEBI:29108"/>
        <note>ligand shared between two neighboring subunits</note>
    </ligand>
</feature>
<feature type="binding site" evidence="1">
    <location>
        <position position="304"/>
    </location>
    <ligand>
        <name>Ca(2+)</name>
        <dbReference type="ChEBI" id="CHEBI:29108"/>
        <note>ligand shared between two neighboring subunits</note>
    </ligand>
</feature>
<feature type="sequence conflict" description="In Ref. 2; AAL40882." evidence="5" ref="2">
    <original>L</original>
    <variation>S</variation>
    <location>
        <position position="320"/>
    </location>
</feature>
<feature type="sequence conflict" description="In Ref. 2; AAL40882." evidence="5" ref="2">
    <original>Q</original>
    <variation>H</variation>
    <location>
        <position position="327"/>
    </location>
</feature>
<feature type="sequence conflict" description="In Ref. 2; AAL40882." evidence="5" ref="2">
    <original>I</original>
    <variation>L</variation>
    <location>
        <position position="563"/>
    </location>
</feature>
<gene>
    <name evidence="1" type="primary">BEST1</name>
    <name type="synonym">VMD2</name>
</gene>
<protein>
    <recommendedName>
        <fullName evidence="1">Bestrophin-1</fullName>
    </recommendedName>
    <alternativeName>
        <fullName>Vitelliform macular dystrophy protein 2 homolog</fullName>
    </alternativeName>
</protein>